<keyword id="KW-0233">DNA recombination</keyword>
<keyword id="KW-0238">DNA-binding</keyword>
<keyword id="KW-0804">Transcription</keyword>
<keyword id="KW-0805">Transcription regulation</keyword>
<keyword id="KW-0810">Translation regulation</keyword>
<organism>
    <name type="scientific">Brucella suis (strain ATCC 23445 / NCTC 10510)</name>
    <dbReference type="NCBI Taxonomy" id="470137"/>
    <lineage>
        <taxon>Bacteria</taxon>
        <taxon>Pseudomonadati</taxon>
        <taxon>Pseudomonadota</taxon>
        <taxon>Alphaproteobacteria</taxon>
        <taxon>Hyphomicrobiales</taxon>
        <taxon>Brucellaceae</taxon>
        <taxon>Brucella/Ochrobactrum group</taxon>
        <taxon>Brucella</taxon>
    </lineage>
</organism>
<sequence length="94" mass="10567">MIKSELVQIIASRNPHLFQRDVENIVGAVFDEITNALAEGNRVELRGFGAFSVKNRPARSGRNPRTGETVDVEEKWVPFFKTGKELRDRLNGAV</sequence>
<evidence type="ECO:0000255" key="1">
    <source>
        <dbReference type="HAMAP-Rule" id="MF_00381"/>
    </source>
</evidence>
<reference key="1">
    <citation type="submission" date="2007-12" db="EMBL/GenBank/DDBJ databases">
        <title>Brucella suis ATCC 23445 whole genome shotgun sequencing project.</title>
        <authorList>
            <person name="Setubal J.C."/>
            <person name="Bowns C."/>
            <person name="Boyle S."/>
            <person name="Crasta O.R."/>
            <person name="Czar M.J."/>
            <person name="Dharmanolla C."/>
            <person name="Gillespie J.J."/>
            <person name="Kenyon R.W."/>
            <person name="Lu J."/>
            <person name="Mane S."/>
            <person name="Mohapatra S."/>
            <person name="Nagrani S."/>
            <person name="Purkayastha A."/>
            <person name="Rajasimha H.K."/>
            <person name="Shallom J.M."/>
            <person name="Shallom S."/>
            <person name="Shukla M."/>
            <person name="Snyder E.E."/>
            <person name="Sobral B.W."/>
            <person name="Wattam A.R."/>
            <person name="Will R."/>
            <person name="Williams K."/>
            <person name="Yoo H."/>
            <person name="Bruce D."/>
            <person name="Detter C."/>
            <person name="Munk C."/>
            <person name="Brettin T.S."/>
        </authorList>
    </citation>
    <scope>NUCLEOTIDE SEQUENCE [LARGE SCALE GENOMIC DNA]</scope>
    <source>
        <strain>ATCC 23445 / NCTC 10510</strain>
    </source>
</reference>
<name>IHFB_BRUSI</name>
<gene>
    <name evidence="1" type="primary">ihfB</name>
    <name evidence="1" type="synonym">himD</name>
    <name type="ordered locus">BSUIS_A0154</name>
</gene>
<accession>B0CIR1</accession>
<dbReference type="EMBL" id="CP000911">
    <property type="protein sequence ID" value="ABY37257.1"/>
    <property type="molecule type" value="Genomic_DNA"/>
</dbReference>
<dbReference type="RefSeq" id="WP_004687882.1">
    <property type="nucleotide sequence ID" value="NC_010169.1"/>
</dbReference>
<dbReference type="SMR" id="B0CIR1"/>
<dbReference type="KEGG" id="bmt:BSUIS_A0154"/>
<dbReference type="HOGENOM" id="CLU_105066_2_0_5"/>
<dbReference type="Proteomes" id="UP000008545">
    <property type="component" value="Chromosome I"/>
</dbReference>
<dbReference type="GO" id="GO:0005694">
    <property type="term" value="C:chromosome"/>
    <property type="evidence" value="ECO:0007669"/>
    <property type="project" value="InterPro"/>
</dbReference>
<dbReference type="GO" id="GO:0005829">
    <property type="term" value="C:cytosol"/>
    <property type="evidence" value="ECO:0007669"/>
    <property type="project" value="TreeGrafter"/>
</dbReference>
<dbReference type="GO" id="GO:0003677">
    <property type="term" value="F:DNA binding"/>
    <property type="evidence" value="ECO:0007669"/>
    <property type="project" value="UniProtKB-UniRule"/>
</dbReference>
<dbReference type="GO" id="GO:0030527">
    <property type="term" value="F:structural constituent of chromatin"/>
    <property type="evidence" value="ECO:0007669"/>
    <property type="project" value="InterPro"/>
</dbReference>
<dbReference type="GO" id="GO:0006310">
    <property type="term" value="P:DNA recombination"/>
    <property type="evidence" value="ECO:0007669"/>
    <property type="project" value="UniProtKB-UniRule"/>
</dbReference>
<dbReference type="GO" id="GO:0006355">
    <property type="term" value="P:regulation of DNA-templated transcription"/>
    <property type="evidence" value="ECO:0007669"/>
    <property type="project" value="UniProtKB-UniRule"/>
</dbReference>
<dbReference type="GO" id="GO:0006417">
    <property type="term" value="P:regulation of translation"/>
    <property type="evidence" value="ECO:0007669"/>
    <property type="project" value="UniProtKB-UniRule"/>
</dbReference>
<dbReference type="CDD" id="cd13836">
    <property type="entry name" value="IHF_B"/>
    <property type="match status" value="1"/>
</dbReference>
<dbReference type="Gene3D" id="4.10.520.10">
    <property type="entry name" value="IHF-like DNA-binding proteins"/>
    <property type="match status" value="1"/>
</dbReference>
<dbReference type="HAMAP" id="MF_00381">
    <property type="entry name" value="IHF_beta"/>
    <property type="match status" value="1"/>
</dbReference>
<dbReference type="InterPro" id="IPR000119">
    <property type="entry name" value="Hist_DNA-bd"/>
</dbReference>
<dbReference type="InterPro" id="IPR020816">
    <property type="entry name" value="Histone-like_DNA-bd_CS"/>
</dbReference>
<dbReference type="InterPro" id="IPR010992">
    <property type="entry name" value="IHF-like_DNA-bd_dom_sf"/>
</dbReference>
<dbReference type="InterPro" id="IPR005685">
    <property type="entry name" value="IHF_beta"/>
</dbReference>
<dbReference type="NCBIfam" id="TIGR00988">
    <property type="entry name" value="hip"/>
    <property type="match status" value="1"/>
</dbReference>
<dbReference type="NCBIfam" id="NF001222">
    <property type="entry name" value="PRK00199.1"/>
    <property type="match status" value="1"/>
</dbReference>
<dbReference type="PANTHER" id="PTHR33175">
    <property type="entry name" value="DNA-BINDING PROTEIN HU"/>
    <property type="match status" value="1"/>
</dbReference>
<dbReference type="PANTHER" id="PTHR33175:SF5">
    <property type="entry name" value="INTEGRATION HOST FACTOR SUBUNIT BETA"/>
    <property type="match status" value="1"/>
</dbReference>
<dbReference type="Pfam" id="PF00216">
    <property type="entry name" value="Bac_DNA_binding"/>
    <property type="match status" value="1"/>
</dbReference>
<dbReference type="PRINTS" id="PR01727">
    <property type="entry name" value="DNABINDINGHU"/>
</dbReference>
<dbReference type="SMART" id="SM00411">
    <property type="entry name" value="BHL"/>
    <property type="match status" value="1"/>
</dbReference>
<dbReference type="SUPFAM" id="SSF47729">
    <property type="entry name" value="IHF-like DNA-binding proteins"/>
    <property type="match status" value="1"/>
</dbReference>
<dbReference type="PROSITE" id="PS00045">
    <property type="entry name" value="HISTONE_LIKE"/>
    <property type="match status" value="1"/>
</dbReference>
<feature type="chain" id="PRO_1000080042" description="Integration host factor subunit beta">
    <location>
        <begin position="1"/>
        <end position="94"/>
    </location>
</feature>
<protein>
    <recommendedName>
        <fullName evidence="1">Integration host factor subunit beta</fullName>
        <shortName evidence="1">IHF-beta</shortName>
    </recommendedName>
</protein>
<comment type="function">
    <text evidence="1">This protein is one of the two subunits of integration host factor, a specific DNA-binding protein that functions in genetic recombination as well as in transcriptional and translational control.</text>
</comment>
<comment type="subunit">
    <text evidence="1">Heterodimer of an alpha and a beta chain.</text>
</comment>
<comment type="similarity">
    <text evidence="1">Belongs to the bacterial histone-like protein family.</text>
</comment>
<proteinExistence type="inferred from homology"/>